<evidence type="ECO:0000255" key="1">
    <source>
        <dbReference type="HAMAP-Rule" id="MF_00061"/>
    </source>
</evidence>
<gene>
    <name evidence="1" type="primary">ispE</name>
    <name type="synonym">ipk</name>
    <name type="ordered locus">NE1827</name>
</gene>
<keyword id="KW-0067">ATP-binding</keyword>
<keyword id="KW-0414">Isoprene biosynthesis</keyword>
<keyword id="KW-0418">Kinase</keyword>
<keyword id="KW-0547">Nucleotide-binding</keyword>
<keyword id="KW-1185">Reference proteome</keyword>
<keyword id="KW-0808">Transferase</keyword>
<feature type="chain" id="PRO_0000189239" description="4-diphosphocytidyl-2-C-methyl-D-erythritol kinase">
    <location>
        <begin position="1"/>
        <end position="278"/>
    </location>
</feature>
<feature type="active site" evidence="1">
    <location>
        <position position="9"/>
    </location>
</feature>
<feature type="active site" evidence="1">
    <location>
        <position position="135"/>
    </location>
</feature>
<feature type="binding site" evidence="1">
    <location>
        <begin position="93"/>
        <end position="103"/>
    </location>
    <ligand>
        <name>ATP</name>
        <dbReference type="ChEBI" id="CHEBI:30616"/>
    </ligand>
</feature>
<organism>
    <name type="scientific">Nitrosomonas europaea (strain ATCC 19718 / CIP 103999 / KCTC 2705 / NBRC 14298)</name>
    <dbReference type="NCBI Taxonomy" id="228410"/>
    <lineage>
        <taxon>Bacteria</taxon>
        <taxon>Pseudomonadati</taxon>
        <taxon>Pseudomonadota</taxon>
        <taxon>Betaproteobacteria</taxon>
        <taxon>Nitrosomonadales</taxon>
        <taxon>Nitrosomonadaceae</taxon>
        <taxon>Nitrosomonas</taxon>
    </lineage>
</organism>
<sequence length="278" mass="30494">MDIFPAPAKLNLFLHVIGRREDGYHLLQTVFRFIDHSDRLHFDITHDGVIRHENLIPGLTETDDLCVRAAKLLRQRFGRESLGVKIHLEKNIPLGGGLGGGSSDAATTLIALNRLWGINWKRERLMALGLELGADVPVFIYGRNAFAEGVGEELHAVDLPSAWYVVLTPPVQISTAAVFTSKELTRNTIPIKMAAFSMGQGHNDLEPVAMRMQPVIAGWLGWLKQQHGTTKVAMSGSGSCMFAEFPSESAAREVFGRLPGDMSGFVVSGLARHPLSDF</sequence>
<dbReference type="EC" id="2.7.1.148" evidence="1"/>
<dbReference type="EMBL" id="AL954747">
    <property type="protein sequence ID" value="CAD85738.1"/>
    <property type="molecule type" value="Genomic_DNA"/>
</dbReference>
<dbReference type="RefSeq" id="WP_011112369.1">
    <property type="nucleotide sequence ID" value="NC_004757.1"/>
</dbReference>
<dbReference type="SMR" id="Q82TQ3"/>
<dbReference type="STRING" id="228410.NE1827"/>
<dbReference type="GeneID" id="87104986"/>
<dbReference type="KEGG" id="neu:NE1827"/>
<dbReference type="eggNOG" id="COG1947">
    <property type="taxonomic scope" value="Bacteria"/>
</dbReference>
<dbReference type="HOGENOM" id="CLU_053057_3_0_4"/>
<dbReference type="OrthoDB" id="9809438at2"/>
<dbReference type="PhylomeDB" id="Q82TQ3"/>
<dbReference type="UniPathway" id="UPA00056">
    <property type="reaction ID" value="UER00094"/>
</dbReference>
<dbReference type="Proteomes" id="UP000001416">
    <property type="component" value="Chromosome"/>
</dbReference>
<dbReference type="GO" id="GO:0050515">
    <property type="term" value="F:4-(cytidine 5'-diphospho)-2-C-methyl-D-erythritol kinase activity"/>
    <property type="evidence" value="ECO:0007669"/>
    <property type="project" value="UniProtKB-UniRule"/>
</dbReference>
<dbReference type="GO" id="GO:0005524">
    <property type="term" value="F:ATP binding"/>
    <property type="evidence" value="ECO:0007669"/>
    <property type="project" value="UniProtKB-UniRule"/>
</dbReference>
<dbReference type="GO" id="GO:0019288">
    <property type="term" value="P:isopentenyl diphosphate biosynthetic process, methylerythritol 4-phosphate pathway"/>
    <property type="evidence" value="ECO:0007669"/>
    <property type="project" value="UniProtKB-UniRule"/>
</dbReference>
<dbReference type="GO" id="GO:0016114">
    <property type="term" value="P:terpenoid biosynthetic process"/>
    <property type="evidence" value="ECO:0007669"/>
    <property type="project" value="InterPro"/>
</dbReference>
<dbReference type="Gene3D" id="3.30.230.10">
    <property type="match status" value="1"/>
</dbReference>
<dbReference type="Gene3D" id="3.30.70.890">
    <property type="entry name" value="GHMP kinase, C-terminal domain"/>
    <property type="match status" value="1"/>
</dbReference>
<dbReference type="HAMAP" id="MF_00061">
    <property type="entry name" value="IspE"/>
    <property type="match status" value="1"/>
</dbReference>
<dbReference type="InterPro" id="IPR013750">
    <property type="entry name" value="GHMP_kinase_C_dom"/>
</dbReference>
<dbReference type="InterPro" id="IPR036554">
    <property type="entry name" value="GHMP_kinase_C_sf"/>
</dbReference>
<dbReference type="InterPro" id="IPR006204">
    <property type="entry name" value="GHMP_kinase_N_dom"/>
</dbReference>
<dbReference type="InterPro" id="IPR004424">
    <property type="entry name" value="IspE"/>
</dbReference>
<dbReference type="InterPro" id="IPR020568">
    <property type="entry name" value="Ribosomal_Su5_D2-typ_SF"/>
</dbReference>
<dbReference type="InterPro" id="IPR014721">
    <property type="entry name" value="Ribsml_uS5_D2-typ_fold_subgr"/>
</dbReference>
<dbReference type="NCBIfam" id="TIGR00154">
    <property type="entry name" value="ispE"/>
    <property type="match status" value="1"/>
</dbReference>
<dbReference type="NCBIfam" id="NF011202">
    <property type="entry name" value="PRK14608.1"/>
    <property type="match status" value="1"/>
</dbReference>
<dbReference type="PANTHER" id="PTHR43527">
    <property type="entry name" value="4-DIPHOSPHOCYTIDYL-2-C-METHYL-D-ERYTHRITOL KINASE, CHLOROPLASTIC"/>
    <property type="match status" value="1"/>
</dbReference>
<dbReference type="PANTHER" id="PTHR43527:SF2">
    <property type="entry name" value="4-DIPHOSPHOCYTIDYL-2-C-METHYL-D-ERYTHRITOL KINASE, CHLOROPLASTIC"/>
    <property type="match status" value="1"/>
</dbReference>
<dbReference type="Pfam" id="PF08544">
    <property type="entry name" value="GHMP_kinases_C"/>
    <property type="match status" value="1"/>
</dbReference>
<dbReference type="Pfam" id="PF00288">
    <property type="entry name" value="GHMP_kinases_N"/>
    <property type="match status" value="1"/>
</dbReference>
<dbReference type="PIRSF" id="PIRSF010376">
    <property type="entry name" value="IspE"/>
    <property type="match status" value="1"/>
</dbReference>
<dbReference type="SUPFAM" id="SSF55060">
    <property type="entry name" value="GHMP Kinase, C-terminal domain"/>
    <property type="match status" value="1"/>
</dbReference>
<dbReference type="SUPFAM" id="SSF54211">
    <property type="entry name" value="Ribosomal protein S5 domain 2-like"/>
    <property type="match status" value="1"/>
</dbReference>
<name>ISPE_NITEU</name>
<protein>
    <recommendedName>
        <fullName evidence="1">4-diphosphocytidyl-2-C-methyl-D-erythritol kinase</fullName>
        <shortName evidence="1">CMK</shortName>
        <ecNumber evidence="1">2.7.1.148</ecNumber>
    </recommendedName>
    <alternativeName>
        <fullName evidence="1">4-(cytidine-5'-diphospho)-2-C-methyl-D-erythritol kinase</fullName>
    </alternativeName>
</protein>
<reference key="1">
    <citation type="journal article" date="2003" name="J. Bacteriol.">
        <title>Complete genome sequence of the ammonia-oxidizing bacterium and obligate chemolithoautotroph Nitrosomonas europaea.</title>
        <authorList>
            <person name="Chain P."/>
            <person name="Lamerdin J.E."/>
            <person name="Larimer F.W."/>
            <person name="Regala W."/>
            <person name="Lao V."/>
            <person name="Land M.L."/>
            <person name="Hauser L."/>
            <person name="Hooper A.B."/>
            <person name="Klotz M.G."/>
            <person name="Norton J."/>
            <person name="Sayavedra-Soto L.A."/>
            <person name="Arciero D.M."/>
            <person name="Hommes N.G."/>
            <person name="Whittaker M.M."/>
            <person name="Arp D.J."/>
        </authorList>
    </citation>
    <scope>NUCLEOTIDE SEQUENCE [LARGE SCALE GENOMIC DNA]</scope>
    <source>
        <strain>ATCC 19718 / CIP 103999 / KCTC 2705 / NBRC 14298</strain>
    </source>
</reference>
<proteinExistence type="inferred from homology"/>
<comment type="function">
    <text evidence="1">Catalyzes the phosphorylation of the position 2 hydroxy group of 4-diphosphocytidyl-2C-methyl-D-erythritol.</text>
</comment>
<comment type="catalytic activity">
    <reaction evidence="1">
        <text>4-CDP-2-C-methyl-D-erythritol + ATP = 4-CDP-2-C-methyl-D-erythritol 2-phosphate + ADP + H(+)</text>
        <dbReference type="Rhea" id="RHEA:18437"/>
        <dbReference type="ChEBI" id="CHEBI:15378"/>
        <dbReference type="ChEBI" id="CHEBI:30616"/>
        <dbReference type="ChEBI" id="CHEBI:57823"/>
        <dbReference type="ChEBI" id="CHEBI:57919"/>
        <dbReference type="ChEBI" id="CHEBI:456216"/>
        <dbReference type="EC" id="2.7.1.148"/>
    </reaction>
</comment>
<comment type="pathway">
    <text evidence="1">Isoprenoid biosynthesis; isopentenyl diphosphate biosynthesis via DXP pathway; isopentenyl diphosphate from 1-deoxy-D-xylulose 5-phosphate: step 3/6.</text>
</comment>
<comment type="similarity">
    <text evidence="1">Belongs to the GHMP kinase family. IspE subfamily.</text>
</comment>
<accession>Q82TQ3</accession>